<evidence type="ECO:0000250" key="1">
    <source>
        <dbReference type="UniProtKB" id="P53875"/>
    </source>
</evidence>
<evidence type="ECO:0000255" key="2"/>
<evidence type="ECO:0000269" key="3">
    <source>
    </source>
</evidence>
<evidence type="ECO:0000305" key="4"/>
<evidence type="ECO:0000312" key="5">
    <source>
        <dbReference type="EMBL" id="CAB62417.1"/>
    </source>
</evidence>
<name>RM19_SCHPO</name>
<dbReference type="EMBL" id="CU329670">
    <property type="protein sequence ID" value="CAB62417.1"/>
    <property type="molecule type" value="Genomic_DNA"/>
</dbReference>
<dbReference type="PIR" id="T50076">
    <property type="entry name" value="T50076"/>
</dbReference>
<dbReference type="RefSeq" id="NP_594095.1">
    <property type="nucleotide sequence ID" value="NM_001019519.2"/>
</dbReference>
<dbReference type="SMR" id="Q9UTK2"/>
<dbReference type="ComplexPortal" id="CPX-10323">
    <property type="entry name" value="54S mitochondrial large ribosomal subunit"/>
</dbReference>
<dbReference type="FunCoup" id="Q9UTK2">
    <property type="interactions" value="335"/>
</dbReference>
<dbReference type="STRING" id="284812.Q9UTK2"/>
<dbReference type="iPTMnet" id="Q9UTK2"/>
<dbReference type="PaxDb" id="4896-SPAC1486.07c.1"/>
<dbReference type="EnsemblFungi" id="SPAC1486.07c.1">
    <property type="protein sequence ID" value="SPAC1486.07c.1:pep"/>
    <property type="gene ID" value="SPAC1486.07c"/>
</dbReference>
<dbReference type="GeneID" id="2541549"/>
<dbReference type="KEGG" id="spo:2541549"/>
<dbReference type="PomBase" id="SPAC1486.07c">
    <property type="gene designation" value="mrpl19"/>
</dbReference>
<dbReference type="VEuPathDB" id="FungiDB:SPAC1486.07c"/>
<dbReference type="eggNOG" id="KOG3257">
    <property type="taxonomic scope" value="Eukaryota"/>
</dbReference>
<dbReference type="HOGENOM" id="CLU_074237_1_0_1"/>
<dbReference type="InParanoid" id="Q9UTK2"/>
<dbReference type="OMA" id="CKQFNAK"/>
<dbReference type="PhylomeDB" id="Q9UTK2"/>
<dbReference type="PRO" id="PR:Q9UTK2"/>
<dbReference type="Proteomes" id="UP000002485">
    <property type="component" value="Chromosome I"/>
</dbReference>
<dbReference type="GO" id="GO:0005737">
    <property type="term" value="C:cytoplasm"/>
    <property type="evidence" value="ECO:0007005"/>
    <property type="project" value="PomBase"/>
</dbReference>
<dbReference type="GO" id="GO:0005762">
    <property type="term" value="C:mitochondrial large ribosomal subunit"/>
    <property type="evidence" value="ECO:0000318"/>
    <property type="project" value="GO_Central"/>
</dbReference>
<dbReference type="GO" id="GO:0070180">
    <property type="term" value="F:large ribosomal subunit rRNA binding"/>
    <property type="evidence" value="ECO:0000318"/>
    <property type="project" value="GO_Central"/>
</dbReference>
<dbReference type="GO" id="GO:0003735">
    <property type="term" value="F:structural constituent of ribosome"/>
    <property type="evidence" value="ECO:0000318"/>
    <property type="project" value="GO_Central"/>
</dbReference>
<dbReference type="GO" id="GO:0032543">
    <property type="term" value="P:mitochondrial translation"/>
    <property type="evidence" value="ECO:0000250"/>
    <property type="project" value="PomBase"/>
</dbReference>
<dbReference type="GO" id="GO:0006412">
    <property type="term" value="P:translation"/>
    <property type="evidence" value="ECO:0000318"/>
    <property type="project" value="GO_Central"/>
</dbReference>
<dbReference type="CDD" id="cd00349">
    <property type="entry name" value="Ribosomal_L11"/>
    <property type="match status" value="1"/>
</dbReference>
<dbReference type="FunFam" id="3.30.1550.10:FF:000005">
    <property type="entry name" value="50S ribosomal protein L11"/>
    <property type="match status" value="1"/>
</dbReference>
<dbReference type="FunFam" id="1.10.10.250:FF:000003">
    <property type="entry name" value="Mitochondrial ribosomal protein L11"/>
    <property type="match status" value="1"/>
</dbReference>
<dbReference type="Gene3D" id="1.10.10.250">
    <property type="entry name" value="Ribosomal protein L11, C-terminal domain"/>
    <property type="match status" value="1"/>
</dbReference>
<dbReference type="Gene3D" id="3.30.1550.10">
    <property type="entry name" value="Ribosomal protein L11/L12, N-terminal domain"/>
    <property type="match status" value="1"/>
</dbReference>
<dbReference type="HAMAP" id="MF_00736">
    <property type="entry name" value="Ribosomal_uL11"/>
    <property type="match status" value="1"/>
</dbReference>
<dbReference type="InterPro" id="IPR000911">
    <property type="entry name" value="Ribosomal_uL11"/>
</dbReference>
<dbReference type="InterPro" id="IPR006519">
    <property type="entry name" value="Ribosomal_uL11_bac-typ"/>
</dbReference>
<dbReference type="InterPro" id="IPR020783">
    <property type="entry name" value="Ribosomal_uL11_C"/>
</dbReference>
<dbReference type="InterPro" id="IPR036769">
    <property type="entry name" value="Ribosomal_uL11_C_sf"/>
</dbReference>
<dbReference type="InterPro" id="IPR020784">
    <property type="entry name" value="Ribosomal_uL11_N"/>
</dbReference>
<dbReference type="InterPro" id="IPR036796">
    <property type="entry name" value="Ribosomal_uL11_N_sf"/>
</dbReference>
<dbReference type="NCBIfam" id="TIGR01632">
    <property type="entry name" value="L11_bact"/>
    <property type="match status" value="1"/>
</dbReference>
<dbReference type="PANTHER" id="PTHR11661">
    <property type="entry name" value="60S RIBOSOMAL PROTEIN L12"/>
    <property type="match status" value="1"/>
</dbReference>
<dbReference type="PANTHER" id="PTHR11661:SF1">
    <property type="entry name" value="LARGE RIBOSOMAL SUBUNIT PROTEIN UL11M"/>
    <property type="match status" value="1"/>
</dbReference>
<dbReference type="Pfam" id="PF00298">
    <property type="entry name" value="Ribosomal_L11"/>
    <property type="match status" value="1"/>
</dbReference>
<dbReference type="Pfam" id="PF03946">
    <property type="entry name" value="Ribosomal_L11_N"/>
    <property type="match status" value="1"/>
</dbReference>
<dbReference type="SMART" id="SM00649">
    <property type="entry name" value="RL11"/>
    <property type="match status" value="1"/>
</dbReference>
<dbReference type="SUPFAM" id="SSF54747">
    <property type="entry name" value="Ribosomal L11/L12e N-terminal domain"/>
    <property type="match status" value="1"/>
</dbReference>
<dbReference type="SUPFAM" id="SSF46906">
    <property type="entry name" value="Ribosomal protein L11, C-terminal domain"/>
    <property type="match status" value="1"/>
</dbReference>
<gene>
    <name evidence="5" type="primary">mrpl19</name>
    <name type="ORF">SPAC1486.07c</name>
</gene>
<reference evidence="5" key="1">
    <citation type="journal article" date="2002" name="Nature">
        <title>The genome sequence of Schizosaccharomyces pombe.</title>
        <authorList>
            <person name="Wood V."/>
            <person name="Gwilliam R."/>
            <person name="Rajandream M.A."/>
            <person name="Lyne M.H."/>
            <person name="Lyne R."/>
            <person name="Stewart A."/>
            <person name="Sgouros J.G."/>
            <person name="Peat N."/>
            <person name="Hayles J."/>
            <person name="Baker S.G."/>
            <person name="Basham D."/>
            <person name="Bowman S."/>
            <person name="Brooks K."/>
            <person name="Brown D."/>
            <person name="Brown S."/>
            <person name="Chillingworth T."/>
            <person name="Churcher C.M."/>
            <person name="Collins M."/>
            <person name="Connor R."/>
            <person name="Cronin A."/>
            <person name="Davis P."/>
            <person name="Feltwell T."/>
            <person name="Fraser A."/>
            <person name="Gentles S."/>
            <person name="Goble A."/>
            <person name="Hamlin N."/>
            <person name="Harris D.E."/>
            <person name="Hidalgo J."/>
            <person name="Hodgson G."/>
            <person name="Holroyd S."/>
            <person name="Hornsby T."/>
            <person name="Howarth S."/>
            <person name="Huckle E.J."/>
            <person name="Hunt S."/>
            <person name="Jagels K."/>
            <person name="James K.D."/>
            <person name="Jones L."/>
            <person name="Jones M."/>
            <person name="Leather S."/>
            <person name="McDonald S."/>
            <person name="McLean J."/>
            <person name="Mooney P."/>
            <person name="Moule S."/>
            <person name="Mungall K.L."/>
            <person name="Murphy L.D."/>
            <person name="Niblett D."/>
            <person name="Odell C."/>
            <person name="Oliver K."/>
            <person name="O'Neil S."/>
            <person name="Pearson D."/>
            <person name="Quail M.A."/>
            <person name="Rabbinowitsch E."/>
            <person name="Rutherford K.M."/>
            <person name="Rutter S."/>
            <person name="Saunders D."/>
            <person name="Seeger K."/>
            <person name="Sharp S."/>
            <person name="Skelton J."/>
            <person name="Simmonds M.N."/>
            <person name="Squares R."/>
            <person name="Squares S."/>
            <person name="Stevens K."/>
            <person name="Taylor K."/>
            <person name="Taylor R.G."/>
            <person name="Tivey A."/>
            <person name="Walsh S.V."/>
            <person name="Warren T."/>
            <person name="Whitehead S."/>
            <person name="Woodward J.R."/>
            <person name="Volckaert G."/>
            <person name="Aert R."/>
            <person name="Robben J."/>
            <person name="Grymonprez B."/>
            <person name="Weltjens I."/>
            <person name="Vanstreels E."/>
            <person name="Rieger M."/>
            <person name="Schaefer M."/>
            <person name="Mueller-Auer S."/>
            <person name="Gabel C."/>
            <person name="Fuchs M."/>
            <person name="Duesterhoeft A."/>
            <person name="Fritzc C."/>
            <person name="Holzer E."/>
            <person name="Moestl D."/>
            <person name="Hilbert H."/>
            <person name="Borzym K."/>
            <person name="Langer I."/>
            <person name="Beck A."/>
            <person name="Lehrach H."/>
            <person name="Reinhardt R."/>
            <person name="Pohl T.M."/>
            <person name="Eger P."/>
            <person name="Zimmermann W."/>
            <person name="Wedler H."/>
            <person name="Wambutt R."/>
            <person name="Purnelle B."/>
            <person name="Goffeau A."/>
            <person name="Cadieu E."/>
            <person name="Dreano S."/>
            <person name="Gloux S."/>
            <person name="Lelaure V."/>
            <person name="Mottier S."/>
            <person name="Galibert F."/>
            <person name="Aves S.J."/>
            <person name="Xiang Z."/>
            <person name="Hunt C."/>
            <person name="Moore K."/>
            <person name="Hurst S.M."/>
            <person name="Lucas M."/>
            <person name="Rochet M."/>
            <person name="Gaillardin C."/>
            <person name="Tallada V.A."/>
            <person name="Garzon A."/>
            <person name="Thode G."/>
            <person name="Daga R.R."/>
            <person name="Cruzado L."/>
            <person name="Jimenez J."/>
            <person name="Sanchez M."/>
            <person name="del Rey F."/>
            <person name="Benito J."/>
            <person name="Dominguez A."/>
            <person name="Revuelta J.L."/>
            <person name="Moreno S."/>
            <person name="Armstrong J."/>
            <person name="Forsburg S.L."/>
            <person name="Cerutti L."/>
            <person name="Lowe T."/>
            <person name="McCombie W.R."/>
            <person name="Paulsen I."/>
            <person name="Potashkin J."/>
            <person name="Shpakovski G.V."/>
            <person name="Ussery D."/>
            <person name="Barrell B.G."/>
            <person name="Nurse P."/>
        </authorList>
    </citation>
    <scope>NUCLEOTIDE SEQUENCE [LARGE SCALE GENOMIC DNA]</scope>
    <source>
        <strain>972 / ATCC 24843</strain>
    </source>
</reference>
<reference evidence="4" key="2">
    <citation type="journal article" date="2006" name="Nat. Biotechnol.">
        <title>ORFeome cloning and global analysis of protein localization in the fission yeast Schizosaccharomyces pombe.</title>
        <authorList>
            <person name="Matsuyama A."/>
            <person name="Arai R."/>
            <person name="Yashiroda Y."/>
            <person name="Shirai A."/>
            <person name="Kamata A."/>
            <person name="Sekido S."/>
            <person name="Kobayashi Y."/>
            <person name="Hashimoto A."/>
            <person name="Hamamoto M."/>
            <person name="Hiraoka Y."/>
            <person name="Horinouchi S."/>
            <person name="Yoshida M."/>
        </authorList>
    </citation>
    <scope>SUBCELLULAR LOCATION [LARGE SCALE ANALYSIS]</scope>
</reference>
<keyword id="KW-0963">Cytoplasm</keyword>
<keyword id="KW-0496">Mitochondrion</keyword>
<keyword id="KW-1185">Reference proteome</keyword>
<keyword id="KW-0687">Ribonucleoprotein</keyword>
<keyword id="KW-0689">Ribosomal protein</keyword>
<keyword id="KW-0809">Transit peptide</keyword>
<proteinExistence type="inferred from homology"/>
<comment type="function">
    <text evidence="1">Component of the mitochondrial ribosome (mitoribosome), a dedicated translation machinery responsible for the synthesis of mitochondrial genome-encoded proteins, including at least some of the essential transmembrane subunits of the mitochondrial respiratory chain. The mitoribosomes are attached to the mitochondrial inner membrane and translation products are cotranslationally integrated into the membrane.</text>
</comment>
<comment type="subunit">
    <text evidence="1">Component of the mitochondrial large ribosomal subunit (mt-LSU). Mature yeast 74S mitochondrial ribosomes consist of a small (37S) and a large (54S) subunit. The 37S small subunit contains a 15S ribosomal RNA (15S mt-rRNA) and at least 32 different proteins. The 54S large subunit contains a 21S rRNA (21S mt-rRNA) and at least 45 different proteins.</text>
</comment>
<comment type="subcellular location">
    <subcellularLocation>
        <location evidence="1">Mitochondrion</location>
    </subcellularLocation>
    <subcellularLocation>
        <location evidence="3">Cytoplasm</location>
    </subcellularLocation>
</comment>
<comment type="similarity">
    <text evidence="2">Belongs to the universal ribosomal protein uL11 family.</text>
</comment>
<organism>
    <name type="scientific">Schizosaccharomyces pombe (strain 972 / ATCC 24843)</name>
    <name type="common">Fission yeast</name>
    <dbReference type="NCBI Taxonomy" id="284812"/>
    <lineage>
        <taxon>Eukaryota</taxon>
        <taxon>Fungi</taxon>
        <taxon>Dikarya</taxon>
        <taxon>Ascomycota</taxon>
        <taxon>Taphrinomycotina</taxon>
        <taxon>Schizosaccharomycetes</taxon>
        <taxon>Schizosaccharomycetales</taxon>
        <taxon>Schizosaccharomycetaceae</taxon>
        <taxon>Schizosaccharomyces</taxon>
    </lineage>
</organism>
<sequence>MASTRTTIIKLIVPAGKATPTPPIGPALGARGLKSIDFCKEFNARTAGWMPNTPVPCKITVTPQRTFTFTIHTPPTSWLISKTLDLEKGSSSPLHDIKGQLSLKHIYEIAKLKSTDPSLQGIELLSLCKSVIGTAKSMGVKVVP</sequence>
<protein>
    <recommendedName>
        <fullName evidence="4">Large ribosomal subunit protein uL11m</fullName>
    </recommendedName>
    <alternativeName>
        <fullName>54S ribosomal protein L19, mitochondrial</fullName>
    </alternativeName>
</protein>
<feature type="transit peptide" description="Mitochondrion" evidence="1 4">
    <location>
        <begin position="1"/>
        <end position="32"/>
    </location>
</feature>
<feature type="chain" id="PRO_0000318133" description="Large ribosomal subunit protein uL11m">
    <location>
        <begin position="33"/>
        <end position="144"/>
    </location>
</feature>
<accession>Q9UTK2</accession>